<evidence type="ECO:0000255" key="1">
    <source>
        <dbReference type="HAMAP-Rule" id="MF_00235"/>
    </source>
</evidence>
<protein>
    <recommendedName>
        <fullName evidence="1">Adenylate kinase</fullName>
        <shortName evidence="1">AK</shortName>
        <ecNumber evidence="1">2.7.4.3</ecNumber>
    </recommendedName>
    <alternativeName>
        <fullName evidence="1">ATP-AMP transphosphorylase</fullName>
    </alternativeName>
    <alternativeName>
        <fullName evidence="1">ATP:AMP phosphotransferase</fullName>
    </alternativeName>
    <alternativeName>
        <fullName evidence="1">Adenylate monophosphate kinase</fullName>
    </alternativeName>
</protein>
<sequence>MRVILLGAPGAGKGTQAKFITEKFGIPQISTGDMLRAAVKAGTELGLIAKSVMDSGGLVSDDLIINLVKERISQEDCKNGFLFDGFPRTIPQAEALVKAGVELDAVVEIAVEDEEIVQRIAGRRVHEASGRVYHTVYNPPKVEGKDDVTGDDLVQRKDDTEETVRHRLSVYHSQTKPLVDFYQKLSAAQGKPKYSHIPGVGSVEAITAKVLQALS</sequence>
<keyword id="KW-0067">ATP-binding</keyword>
<keyword id="KW-0963">Cytoplasm</keyword>
<keyword id="KW-0418">Kinase</keyword>
<keyword id="KW-0545">Nucleotide biosynthesis</keyword>
<keyword id="KW-0547">Nucleotide-binding</keyword>
<keyword id="KW-0808">Transferase</keyword>
<accession>C3KEC6</accession>
<comment type="function">
    <text evidence="1">Catalyzes the reversible transfer of the terminal phosphate group between ATP and AMP. Plays an important role in cellular energy homeostasis and in adenine nucleotide metabolism.</text>
</comment>
<comment type="catalytic activity">
    <reaction evidence="1">
        <text>AMP + ATP = 2 ADP</text>
        <dbReference type="Rhea" id="RHEA:12973"/>
        <dbReference type="ChEBI" id="CHEBI:30616"/>
        <dbReference type="ChEBI" id="CHEBI:456215"/>
        <dbReference type="ChEBI" id="CHEBI:456216"/>
        <dbReference type="EC" id="2.7.4.3"/>
    </reaction>
</comment>
<comment type="pathway">
    <text evidence="1">Purine metabolism; AMP biosynthesis via salvage pathway; AMP from ADP: step 1/1.</text>
</comment>
<comment type="subunit">
    <text evidence="1">Monomer.</text>
</comment>
<comment type="subcellular location">
    <subcellularLocation>
        <location evidence="1">Cytoplasm</location>
    </subcellularLocation>
</comment>
<comment type="domain">
    <text evidence="1">Consists of three domains, a large central CORE domain and two small peripheral domains, NMPbind and LID, which undergo movements during catalysis. The LID domain closes over the site of phosphoryl transfer upon ATP binding. Assembling and dissambling the active center during each catalytic cycle provides an effective means to prevent ATP hydrolysis.</text>
</comment>
<comment type="similarity">
    <text evidence="1">Belongs to the adenylate kinase family.</text>
</comment>
<dbReference type="EC" id="2.7.4.3" evidence="1"/>
<dbReference type="EMBL" id="AM181176">
    <property type="protein sequence ID" value="CAY47498.1"/>
    <property type="molecule type" value="Genomic_DNA"/>
</dbReference>
<dbReference type="RefSeq" id="WP_012722567.1">
    <property type="nucleotide sequence ID" value="NC_012660.1"/>
</dbReference>
<dbReference type="SMR" id="C3KEC6"/>
<dbReference type="STRING" id="294.SRM1_04522"/>
<dbReference type="GeneID" id="93462857"/>
<dbReference type="eggNOG" id="COG0563">
    <property type="taxonomic scope" value="Bacteria"/>
</dbReference>
<dbReference type="HOGENOM" id="CLU_032354_1_2_6"/>
<dbReference type="OrthoDB" id="9805030at2"/>
<dbReference type="UniPathway" id="UPA00588">
    <property type="reaction ID" value="UER00649"/>
</dbReference>
<dbReference type="GO" id="GO:0005737">
    <property type="term" value="C:cytoplasm"/>
    <property type="evidence" value="ECO:0007669"/>
    <property type="project" value="UniProtKB-SubCell"/>
</dbReference>
<dbReference type="GO" id="GO:0004017">
    <property type="term" value="F:adenylate kinase activity"/>
    <property type="evidence" value="ECO:0007669"/>
    <property type="project" value="UniProtKB-UniRule"/>
</dbReference>
<dbReference type="GO" id="GO:0005524">
    <property type="term" value="F:ATP binding"/>
    <property type="evidence" value="ECO:0007669"/>
    <property type="project" value="UniProtKB-UniRule"/>
</dbReference>
<dbReference type="GO" id="GO:0044209">
    <property type="term" value="P:AMP salvage"/>
    <property type="evidence" value="ECO:0007669"/>
    <property type="project" value="UniProtKB-UniRule"/>
</dbReference>
<dbReference type="CDD" id="cd01428">
    <property type="entry name" value="ADK"/>
    <property type="match status" value="1"/>
</dbReference>
<dbReference type="FunFam" id="3.40.50.300:FF:000106">
    <property type="entry name" value="Adenylate kinase mitochondrial"/>
    <property type="match status" value="1"/>
</dbReference>
<dbReference type="Gene3D" id="3.40.50.300">
    <property type="entry name" value="P-loop containing nucleotide triphosphate hydrolases"/>
    <property type="match status" value="1"/>
</dbReference>
<dbReference type="HAMAP" id="MF_00235">
    <property type="entry name" value="Adenylate_kinase_Adk"/>
    <property type="match status" value="1"/>
</dbReference>
<dbReference type="InterPro" id="IPR006259">
    <property type="entry name" value="Adenyl_kin_sub"/>
</dbReference>
<dbReference type="InterPro" id="IPR000850">
    <property type="entry name" value="Adenylat/UMP-CMP_kin"/>
</dbReference>
<dbReference type="InterPro" id="IPR033690">
    <property type="entry name" value="Adenylat_kinase_CS"/>
</dbReference>
<dbReference type="InterPro" id="IPR007862">
    <property type="entry name" value="Adenylate_kinase_lid-dom"/>
</dbReference>
<dbReference type="InterPro" id="IPR027417">
    <property type="entry name" value="P-loop_NTPase"/>
</dbReference>
<dbReference type="NCBIfam" id="TIGR01351">
    <property type="entry name" value="adk"/>
    <property type="match status" value="1"/>
</dbReference>
<dbReference type="NCBIfam" id="NF001379">
    <property type="entry name" value="PRK00279.1-1"/>
    <property type="match status" value="1"/>
</dbReference>
<dbReference type="NCBIfam" id="NF001380">
    <property type="entry name" value="PRK00279.1-2"/>
    <property type="match status" value="1"/>
</dbReference>
<dbReference type="NCBIfam" id="NF001381">
    <property type="entry name" value="PRK00279.1-3"/>
    <property type="match status" value="1"/>
</dbReference>
<dbReference type="NCBIfam" id="NF011100">
    <property type="entry name" value="PRK14527.1"/>
    <property type="match status" value="1"/>
</dbReference>
<dbReference type="PANTHER" id="PTHR23359">
    <property type="entry name" value="NUCLEOTIDE KINASE"/>
    <property type="match status" value="1"/>
</dbReference>
<dbReference type="Pfam" id="PF00406">
    <property type="entry name" value="ADK"/>
    <property type="match status" value="1"/>
</dbReference>
<dbReference type="Pfam" id="PF05191">
    <property type="entry name" value="ADK_lid"/>
    <property type="match status" value="1"/>
</dbReference>
<dbReference type="PRINTS" id="PR00094">
    <property type="entry name" value="ADENYLTKNASE"/>
</dbReference>
<dbReference type="SUPFAM" id="SSF52540">
    <property type="entry name" value="P-loop containing nucleoside triphosphate hydrolases"/>
    <property type="match status" value="1"/>
</dbReference>
<dbReference type="PROSITE" id="PS00113">
    <property type="entry name" value="ADENYLATE_KINASE"/>
    <property type="match status" value="1"/>
</dbReference>
<name>KAD_PSEFS</name>
<organism>
    <name type="scientific">Pseudomonas fluorescens (strain SBW25)</name>
    <dbReference type="NCBI Taxonomy" id="216595"/>
    <lineage>
        <taxon>Bacteria</taxon>
        <taxon>Pseudomonadati</taxon>
        <taxon>Pseudomonadota</taxon>
        <taxon>Gammaproteobacteria</taxon>
        <taxon>Pseudomonadales</taxon>
        <taxon>Pseudomonadaceae</taxon>
        <taxon>Pseudomonas</taxon>
    </lineage>
</organism>
<reference key="1">
    <citation type="journal article" date="2009" name="Genome Biol.">
        <title>Genomic and genetic analyses of diversity and plant interactions of Pseudomonas fluorescens.</title>
        <authorList>
            <person name="Silby M.W."/>
            <person name="Cerdeno-Tarraga A.M."/>
            <person name="Vernikos G.S."/>
            <person name="Giddens S.R."/>
            <person name="Jackson R.W."/>
            <person name="Preston G.M."/>
            <person name="Zhang X.-X."/>
            <person name="Moon C.D."/>
            <person name="Gehrig S.M."/>
            <person name="Godfrey S.A.C."/>
            <person name="Knight C.G."/>
            <person name="Malone J.G."/>
            <person name="Robinson Z."/>
            <person name="Spiers A.J."/>
            <person name="Harris S."/>
            <person name="Challis G.L."/>
            <person name="Yaxley A.M."/>
            <person name="Harris D."/>
            <person name="Seeger K."/>
            <person name="Murphy L."/>
            <person name="Rutter S."/>
            <person name="Squares R."/>
            <person name="Quail M.A."/>
            <person name="Saunders E."/>
            <person name="Mavromatis K."/>
            <person name="Brettin T.S."/>
            <person name="Bentley S.D."/>
            <person name="Hothersall J."/>
            <person name="Stephens E."/>
            <person name="Thomas C.M."/>
            <person name="Parkhill J."/>
            <person name="Levy S.B."/>
            <person name="Rainey P.B."/>
            <person name="Thomson N.R."/>
        </authorList>
    </citation>
    <scope>NUCLEOTIDE SEQUENCE [LARGE SCALE GENOMIC DNA]</scope>
    <source>
        <strain>SBW25</strain>
    </source>
</reference>
<feature type="chain" id="PRO_1000204422" description="Adenylate kinase">
    <location>
        <begin position="1"/>
        <end position="215"/>
    </location>
</feature>
<feature type="region of interest" description="NMP" evidence="1">
    <location>
        <begin position="30"/>
        <end position="59"/>
    </location>
</feature>
<feature type="region of interest" description="LID" evidence="1">
    <location>
        <begin position="122"/>
        <end position="159"/>
    </location>
</feature>
<feature type="binding site" evidence="1">
    <location>
        <begin position="10"/>
        <end position="15"/>
    </location>
    <ligand>
        <name>ATP</name>
        <dbReference type="ChEBI" id="CHEBI:30616"/>
    </ligand>
</feature>
<feature type="binding site" evidence="1">
    <location>
        <position position="31"/>
    </location>
    <ligand>
        <name>AMP</name>
        <dbReference type="ChEBI" id="CHEBI:456215"/>
    </ligand>
</feature>
<feature type="binding site" evidence="1">
    <location>
        <position position="36"/>
    </location>
    <ligand>
        <name>AMP</name>
        <dbReference type="ChEBI" id="CHEBI:456215"/>
    </ligand>
</feature>
<feature type="binding site" evidence="1">
    <location>
        <begin position="57"/>
        <end position="59"/>
    </location>
    <ligand>
        <name>AMP</name>
        <dbReference type="ChEBI" id="CHEBI:456215"/>
    </ligand>
</feature>
<feature type="binding site" evidence="1">
    <location>
        <begin position="85"/>
        <end position="88"/>
    </location>
    <ligand>
        <name>AMP</name>
        <dbReference type="ChEBI" id="CHEBI:456215"/>
    </ligand>
</feature>
<feature type="binding site" evidence="1">
    <location>
        <position position="92"/>
    </location>
    <ligand>
        <name>AMP</name>
        <dbReference type="ChEBI" id="CHEBI:456215"/>
    </ligand>
</feature>
<feature type="binding site" evidence="1">
    <location>
        <position position="123"/>
    </location>
    <ligand>
        <name>ATP</name>
        <dbReference type="ChEBI" id="CHEBI:30616"/>
    </ligand>
</feature>
<feature type="binding site" evidence="1">
    <location>
        <begin position="132"/>
        <end position="133"/>
    </location>
    <ligand>
        <name>ATP</name>
        <dbReference type="ChEBI" id="CHEBI:30616"/>
    </ligand>
</feature>
<feature type="binding site" evidence="1">
    <location>
        <position position="156"/>
    </location>
    <ligand>
        <name>AMP</name>
        <dbReference type="ChEBI" id="CHEBI:456215"/>
    </ligand>
</feature>
<feature type="binding site" evidence="1">
    <location>
        <position position="167"/>
    </location>
    <ligand>
        <name>AMP</name>
        <dbReference type="ChEBI" id="CHEBI:456215"/>
    </ligand>
</feature>
<feature type="binding site" evidence="1">
    <location>
        <position position="201"/>
    </location>
    <ligand>
        <name>ATP</name>
        <dbReference type="ChEBI" id="CHEBI:30616"/>
    </ligand>
</feature>
<proteinExistence type="inferred from homology"/>
<gene>
    <name evidence="1" type="primary">adk</name>
    <name type="ordered locus">PFLU_1240</name>
</gene>